<feature type="chain" id="PRO_1000189616" description="Pantothenate kinase">
    <location>
        <begin position="1"/>
        <end position="316"/>
    </location>
</feature>
<feature type="binding site" evidence="1">
    <location>
        <begin position="95"/>
        <end position="102"/>
    </location>
    <ligand>
        <name>ATP</name>
        <dbReference type="ChEBI" id="CHEBI:30616"/>
    </ligand>
</feature>
<sequence length="316" mass="35973">MTPTNQIHNALYLPFQREQWAELRESVPLTLSENDLADLRGINEKISLSEVTDIYLPLSRLLNLNVGAKQQRGLALNEFLGRVPPKRPYIISIAGSVAVGKSTTARILQALLSHWPEHPKVDLITTDGFLHPLAELKRRGLMQRKGFPESYDMKGLVDFISAIKAGEAAVSAPIYSHITYDRVPDQFQWIRQPDILIIEGLNVLQTGQDSAVDTKRPFVSDFVDFSIYVDAEEELLKKWYIERFLQFRTGAFSEESSYFHHYSQLTDHEATGIASKIWDSINGPNLTLNIQPTRERAHLILQKGQDHLMDQVLLRK</sequence>
<comment type="catalytic activity">
    <reaction evidence="1">
        <text>(R)-pantothenate + ATP = (R)-4'-phosphopantothenate + ADP + H(+)</text>
        <dbReference type="Rhea" id="RHEA:16373"/>
        <dbReference type="ChEBI" id="CHEBI:10986"/>
        <dbReference type="ChEBI" id="CHEBI:15378"/>
        <dbReference type="ChEBI" id="CHEBI:29032"/>
        <dbReference type="ChEBI" id="CHEBI:30616"/>
        <dbReference type="ChEBI" id="CHEBI:456216"/>
        <dbReference type="EC" id="2.7.1.33"/>
    </reaction>
</comment>
<comment type="pathway">
    <text evidence="1">Cofactor biosynthesis; coenzyme A biosynthesis; CoA from (R)-pantothenate: step 1/5.</text>
</comment>
<comment type="subcellular location">
    <subcellularLocation>
        <location evidence="1">Cytoplasm</location>
    </subcellularLocation>
</comment>
<comment type="similarity">
    <text evidence="1">Belongs to the prokaryotic pantothenate kinase family.</text>
</comment>
<evidence type="ECO:0000255" key="1">
    <source>
        <dbReference type="HAMAP-Rule" id="MF_00215"/>
    </source>
</evidence>
<keyword id="KW-0067">ATP-binding</keyword>
<keyword id="KW-0173">Coenzyme A biosynthesis</keyword>
<keyword id="KW-0963">Cytoplasm</keyword>
<keyword id="KW-0418">Kinase</keyword>
<keyword id="KW-0547">Nucleotide-binding</keyword>
<keyword id="KW-0808">Transferase</keyword>
<proteinExistence type="inferred from homology"/>
<dbReference type="EC" id="2.7.1.33" evidence="1"/>
<dbReference type="EMBL" id="CP000472">
    <property type="protein sequence ID" value="ACJ28751.1"/>
    <property type="molecule type" value="Genomic_DNA"/>
</dbReference>
<dbReference type="RefSeq" id="WP_020912124.1">
    <property type="nucleotide sequence ID" value="NC_011566.1"/>
</dbReference>
<dbReference type="SMR" id="B8CNB7"/>
<dbReference type="STRING" id="225849.swp_1994"/>
<dbReference type="KEGG" id="swp:swp_1994"/>
<dbReference type="eggNOG" id="COG1072">
    <property type="taxonomic scope" value="Bacteria"/>
</dbReference>
<dbReference type="HOGENOM" id="CLU_053818_1_1_6"/>
<dbReference type="OrthoDB" id="1550976at2"/>
<dbReference type="UniPathway" id="UPA00241">
    <property type="reaction ID" value="UER00352"/>
</dbReference>
<dbReference type="Proteomes" id="UP000000753">
    <property type="component" value="Chromosome"/>
</dbReference>
<dbReference type="GO" id="GO:0005737">
    <property type="term" value="C:cytoplasm"/>
    <property type="evidence" value="ECO:0007669"/>
    <property type="project" value="UniProtKB-SubCell"/>
</dbReference>
<dbReference type="GO" id="GO:0005524">
    <property type="term" value="F:ATP binding"/>
    <property type="evidence" value="ECO:0007669"/>
    <property type="project" value="UniProtKB-UniRule"/>
</dbReference>
<dbReference type="GO" id="GO:0004594">
    <property type="term" value="F:pantothenate kinase activity"/>
    <property type="evidence" value="ECO:0007669"/>
    <property type="project" value="UniProtKB-UniRule"/>
</dbReference>
<dbReference type="GO" id="GO:0015937">
    <property type="term" value="P:coenzyme A biosynthetic process"/>
    <property type="evidence" value="ECO:0007669"/>
    <property type="project" value="UniProtKB-UniRule"/>
</dbReference>
<dbReference type="CDD" id="cd02025">
    <property type="entry name" value="PanK"/>
    <property type="match status" value="1"/>
</dbReference>
<dbReference type="FunFam" id="3.40.50.300:FF:000242">
    <property type="entry name" value="Pantothenate kinase"/>
    <property type="match status" value="1"/>
</dbReference>
<dbReference type="Gene3D" id="3.40.50.300">
    <property type="entry name" value="P-loop containing nucleotide triphosphate hydrolases"/>
    <property type="match status" value="1"/>
</dbReference>
<dbReference type="HAMAP" id="MF_00215">
    <property type="entry name" value="Pantothen_kinase_1"/>
    <property type="match status" value="1"/>
</dbReference>
<dbReference type="InterPro" id="IPR027417">
    <property type="entry name" value="P-loop_NTPase"/>
</dbReference>
<dbReference type="InterPro" id="IPR004566">
    <property type="entry name" value="PanK"/>
</dbReference>
<dbReference type="InterPro" id="IPR006083">
    <property type="entry name" value="PRK/URK"/>
</dbReference>
<dbReference type="NCBIfam" id="TIGR00554">
    <property type="entry name" value="panK_bact"/>
    <property type="match status" value="1"/>
</dbReference>
<dbReference type="PANTHER" id="PTHR10285">
    <property type="entry name" value="URIDINE KINASE"/>
    <property type="match status" value="1"/>
</dbReference>
<dbReference type="Pfam" id="PF00485">
    <property type="entry name" value="PRK"/>
    <property type="match status" value="1"/>
</dbReference>
<dbReference type="PIRSF" id="PIRSF000545">
    <property type="entry name" value="Pantothenate_kin"/>
    <property type="match status" value="1"/>
</dbReference>
<dbReference type="SUPFAM" id="SSF52540">
    <property type="entry name" value="P-loop containing nucleoside triphosphate hydrolases"/>
    <property type="match status" value="1"/>
</dbReference>
<organism>
    <name type="scientific">Shewanella piezotolerans (strain WP3 / JCM 13877)</name>
    <dbReference type="NCBI Taxonomy" id="225849"/>
    <lineage>
        <taxon>Bacteria</taxon>
        <taxon>Pseudomonadati</taxon>
        <taxon>Pseudomonadota</taxon>
        <taxon>Gammaproteobacteria</taxon>
        <taxon>Alteromonadales</taxon>
        <taxon>Shewanellaceae</taxon>
        <taxon>Shewanella</taxon>
    </lineage>
</organism>
<accession>B8CNB7</accession>
<gene>
    <name evidence="1" type="primary">coaA</name>
    <name type="ordered locus">swp_1994</name>
</gene>
<name>COAA_SHEPW</name>
<reference key="1">
    <citation type="journal article" date="2008" name="PLoS ONE">
        <title>Environmental adaptation: genomic analysis of the piezotolerant and psychrotolerant deep-sea iron reducing bacterium Shewanella piezotolerans WP3.</title>
        <authorList>
            <person name="Wang F."/>
            <person name="Wang J."/>
            <person name="Jian H."/>
            <person name="Zhang B."/>
            <person name="Li S."/>
            <person name="Wang F."/>
            <person name="Zeng X."/>
            <person name="Gao L."/>
            <person name="Bartlett D.H."/>
            <person name="Yu J."/>
            <person name="Hu S."/>
            <person name="Xiao X."/>
        </authorList>
    </citation>
    <scope>NUCLEOTIDE SEQUENCE [LARGE SCALE GENOMIC DNA]</scope>
    <source>
        <strain>WP3 / JCM 13877</strain>
    </source>
</reference>
<protein>
    <recommendedName>
        <fullName evidence="1">Pantothenate kinase</fullName>
        <ecNumber evidence="1">2.7.1.33</ecNumber>
    </recommendedName>
    <alternativeName>
        <fullName evidence="1">Pantothenic acid kinase</fullName>
    </alternativeName>
</protein>